<sequence>MLRCREVYNICKGAMSNEVKHYDYLVIGGGSGGVASSRRAASYGAKTVLIEGKALGGTCVNVGCVPKKVMWYASDLAHRLLHARDYGLLQEVDISKEKLHFNWKEFAGKRNAYVERLNGIYERNLAKEGVEYVHGWARFNSEGQVEVTRPDQTTEKYTADHILIATGGEPVLPEGIPGAEYGVDSDGFFRLEEQPKKVVISGSGYIATEFAGVFNGLGTETHIVIRKDHVLTKFDPSIQEIVTEHYEKEGVNIHKKESIQRVEKDPNTGKLTVHLSGKIIEDVDQLVWAIGRKSLLGIAPENVGVKLGETGHVVVDEYQNTSTKGIYALGDVVGNMELTPVAIAAGRKLANRLFGPEQMRAQKQDYDNVPSVVFSHPEAGSIGLTEPQAIERYGKENIKIYQTKFTAMYYAMLEDKSPTKYKLICAGPEEKVVGLHIVGDGSAEILQGFGVAIKMGATKADFDSCVAIHPTSAEEIVTLK</sequence>
<feature type="chain" id="PRO_0000067965" description="Glutathione reductase">
    <location>
        <begin position="1"/>
        <end position="480"/>
    </location>
</feature>
<feature type="active site" description="Proton acceptor" evidence="1">
    <location>
        <position position="469"/>
    </location>
</feature>
<feature type="binding site" evidence="3">
    <location>
        <position position="31"/>
    </location>
    <ligand>
        <name>FAD</name>
        <dbReference type="ChEBI" id="CHEBI:57692"/>
    </ligand>
</feature>
<feature type="binding site" evidence="1">
    <location>
        <position position="31"/>
    </location>
    <ligand>
        <name>glutathione</name>
        <dbReference type="ChEBI" id="CHEBI:57925"/>
    </ligand>
</feature>
<feature type="binding site" evidence="3">
    <location>
        <position position="32"/>
    </location>
    <ligand>
        <name>FAD</name>
        <dbReference type="ChEBI" id="CHEBI:57692"/>
    </ligand>
</feature>
<feature type="binding site" evidence="1">
    <location>
        <position position="38"/>
    </location>
    <ligand>
        <name>glutathione</name>
        <dbReference type="ChEBI" id="CHEBI:57925"/>
    </ligand>
</feature>
<feature type="binding site" evidence="3">
    <location>
        <position position="51"/>
    </location>
    <ligand>
        <name>FAD</name>
        <dbReference type="ChEBI" id="CHEBI:57692"/>
    </ligand>
</feature>
<feature type="binding site" evidence="3">
    <location>
        <position position="58"/>
    </location>
    <ligand>
        <name>FAD</name>
        <dbReference type="ChEBI" id="CHEBI:57692"/>
    </ligand>
</feature>
<feature type="binding site" evidence="3">
    <location>
        <position position="59"/>
    </location>
    <ligand>
        <name>FAD</name>
        <dbReference type="ChEBI" id="CHEBI:57692"/>
    </ligand>
</feature>
<feature type="binding site" evidence="3">
    <location>
        <position position="67"/>
    </location>
    <ligand>
        <name>FAD</name>
        <dbReference type="ChEBI" id="CHEBI:57692"/>
    </ligand>
</feature>
<feature type="binding site" evidence="1">
    <location>
        <position position="121"/>
    </location>
    <ligand>
        <name>glutathione</name>
        <dbReference type="ChEBI" id="CHEBI:57925"/>
    </ligand>
</feature>
<feature type="binding site" evidence="3">
    <location>
        <position position="137"/>
    </location>
    <ligand>
        <name>FAD</name>
        <dbReference type="ChEBI" id="CHEBI:57692"/>
    </ligand>
</feature>
<feature type="binding site" evidence="2">
    <location>
        <position position="206"/>
    </location>
    <ligand>
        <name>NADP(+)</name>
        <dbReference type="ChEBI" id="CHEBI:58349"/>
    </ligand>
</feature>
<feature type="binding site" evidence="2">
    <location>
        <position position="209"/>
    </location>
    <ligand>
        <name>NADP(+)</name>
        <dbReference type="ChEBI" id="CHEBI:58349"/>
    </ligand>
</feature>
<feature type="binding site" evidence="2">
    <location>
        <position position="226"/>
    </location>
    <ligand>
        <name>NADP(+)</name>
        <dbReference type="ChEBI" id="CHEBI:58349"/>
    </ligand>
</feature>
<feature type="binding site" evidence="2">
    <location>
        <position position="291"/>
    </location>
    <ligand>
        <name>NADP(+)</name>
        <dbReference type="ChEBI" id="CHEBI:58349"/>
    </ligand>
</feature>
<feature type="binding site" evidence="3">
    <location>
        <position position="331"/>
    </location>
    <ligand>
        <name>FAD</name>
        <dbReference type="ChEBI" id="CHEBI:57692"/>
    </ligand>
</feature>
<feature type="binding site" evidence="2">
    <location>
        <position position="337"/>
    </location>
    <ligand>
        <name>NADP(+)</name>
        <dbReference type="ChEBI" id="CHEBI:58349"/>
    </ligand>
</feature>
<feature type="binding site" evidence="3">
    <location>
        <position position="339"/>
    </location>
    <ligand>
        <name>FAD</name>
        <dbReference type="ChEBI" id="CHEBI:57692"/>
    </ligand>
</feature>
<feature type="binding site" evidence="1">
    <location>
        <position position="347"/>
    </location>
    <ligand>
        <name>glutathione</name>
        <dbReference type="ChEBI" id="CHEBI:57925"/>
    </ligand>
</feature>
<feature type="binding site" evidence="2">
    <location>
        <position position="372"/>
    </location>
    <ligand>
        <name>NADP(+)</name>
        <dbReference type="ChEBI" id="CHEBI:58349"/>
    </ligand>
</feature>
<feature type="binding site" evidence="3">
    <location>
        <position position="422"/>
    </location>
    <ligand>
        <name>glutathione</name>
        <dbReference type="ChEBI" id="CHEBI:57925"/>
    </ligand>
</feature>
<feature type="binding site" evidence="3">
    <location>
        <position position="469"/>
    </location>
    <ligand>
        <name>FAD</name>
        <dbReference type="ChEBI" id="CHEBI:57692"/>
    </ligand>
</feature>
<feature type="disulfide bond" description="Redox-active" evidence="3">
    <location>
        <begin position="59"/>
        <end position="64"/>
    </location>
</feature>
<evidence type="ECO:0000250" key="1">
    <source>
        <dbReference type="UniProtKB" id="P00390"/>
    </source>
</evidence>
<evidence type="ECO:0000250" key="2">
    <source>
        <dbReference type="UniProtKB" id="P06715"/>
    </source>
</evidence>
<evidence type="ECO:0000250" key="3">
    <source>
        <dbReference type="UniProtKB" id="P41921"/>
    </source>
</evidence>
<evidence type="ECO:0000305" key="4"/>
<protein>
    <recommendedName>
        <fullName>Glutathione reductase</fullName>
        <shortName>GR</shortName>
        <shortName>GRase</shortName>
        <ecNumber>1.8.1.7</ecNumber>
    </recommendedName>
</protein>
<proteinExistence type="inferred from homology"/>
<reference key="1">
    <citation type="journal article" date="2004" name="Science">
        <title>The Ashbya gossypii genome as a tool for mapping the ancient Saccharomyces cerevisiae genome.</title>
        <authorList>
            <person name="Dietrich F.S."/>
            <person name="Voegeli S."/>
            <person name="Brachat S."/>
            <person name="Lerch A."/>
            <person name="Gates K."/>
            <person name="Steiner S."/>
            <person name="Mohr C."/>
            <person name="Poehlmann R."/>
            <person name="Luedi P."/>
            <person name="Choi S."/>
            <person name="Wing R.A."/>
            <person name="Flavier A."/>
            <person name="Gaffney T.D."/>
            <person name="Philippsen P."/>
        </authorList>
    </citation>
    <scope>NUCLEOTIDE SEQUENCE [LARGE SCALE GENOMIC DNA]</scope>
    <source>
        <strain>ATCC 10895 / CBS 109.51 / FGSC 9923 / NRRL Y-1056</strain>
    </source>
</reference>
<reference key="2">
    <citation type="journal article" date="2013" name="G3 (Bethesda)">
        <title>Genomes of Ashbya fungi isolated from insects reveal four mating-type loci, numerous translocations, lack of transposons, and distinct gene duplications.</title>
        <authorList>
            <person name="Dietrich F.S."/>
            <person name="Voegeli S."/>
            <person name="Kuo S."/>
            <person name="Philippsen P."/>
        </authorList>
    </citation>
    <scope>GENOME REANNOTATION</scope>
    <source>
        <strain>ATCC 10895 / CBS 109.51 / FGSC 9923 / NRRL Y-1056</strain>
    </source>
</reference>
<name>GSHR_EREGS</name>
<comment type="function">
    <text evidence="3">Catalyzes the reduction of glutathione disulfide (GSSG) to reduced glutathione (GSH). Constitutes the major mechanism to maintain a high GSH:GSSG ratio in the cytosol.</text>
</comment>
<comment type="catalytic activity">
    <reaction evidence="3">
        <text>2 glutathione + NADP(+) = glutathione disulfide + NADPH + H(+)</text>
        <dbReference type="Rhea" id="RHEA:11740"/>
        <dbReference type="ChEBI" id="CHEBI:15378"/>
        <dbReference type="ChEBI" id="CHEBI:57783"/>
        <dbReference type="ChEBI" id="CHEBI:57925"/>
        <dbReference type="ChEBI" id="CHEBI:58297"/>
        <dbReference type="ChEBI" id="CHEBI:58349"/>
        <dbReference type="EC" id="1.8.1.7"/>
    </reaction>
</comment>
<comment type="cofactor">
    <cofactor evidence="3">
        <name>FAD</name>
        <dbReference type="ChEBI" id="CHEBI:57692"/>
    </cofactor>
    <text evidence="3">Binds 1 FAD per subunit.</text>
</comment>
<comment type="subunit">
    <text evidence="3">Homodimer.</text>
</comment>
<comment type="subcellular location">
    <subcellularLocation>
        <location evidence="3">Cytoplasm</location>
    </subcellularLocation>
    <subcellularLocation>
        <location evidence="3">Mitochondrion</location>
    </subcellularLocation>
</comment>
<comment type="miscellaneous">
    <text evidence="3">The active site is a redox-active disulfide bond.</text>
</comment>
<comment type="similarity">
    <text evidence="4">Belongs to the class-I pyridine nucleotide-disulfide oxidoreductase family.</text>
</comment>
<dbReference type="EC" id="1.8.1.7"/>
<dbReference type="EMBL" id="AE016820">
    <property type="protein sequence ID" value="AAS54686.1"/>
    <property type="molecule type" value="Genomic_DNA"/>
</dbReference>
<dbReference type="RefSeq" id="NP_986862.1">
    <property type="nucleotide sequence ID" value="NM_211924.1"/>
</dbReference>
<dbReference type="SMR" id="Q74ZK4"/>
<dbReference type="FunCoup" id="Q74ZK4">
    <property type="interactions" value="1114"/>
</dbReference>
<dbReference type="STRING" id="284811.Q74ZK4"/>
<dbReference type="EnsemblFungi" id="AAS54686">
    <property type="protein sequence ID" value="AAS54686"/>
    <property type="gene ID" value="AGOS_AGR196W"/>
</dbReference>
<dbReference type="GeneID" id="4623164"/>
<dbReference type="KEGG" id="ago:AGOS_AGR196W"/>
<dbReference type="eggNOG" id="KOG0405">
    <property type="taxonomic scope" value="Eukaryota"/>
</dbReference>
<dbReference type="HOGENOM" id="CLU_016755_2_2_1"/>
<dbReference type="InParanoid" id="Q74ZK4"/>
<dbReference type="OMA" id="MSKHYDY"/>
<dbReference type="OrthoDB" id="5956163at2759"/>
<dbReference type="Proteomes" id="UP000000591">
    <property type="component" value="Chromosome VII"/>
</dbReference>
<dbReference type="GO" id="GO:0005829">
    <property type="term" value="C:cytosol"/>
    <property type="evidence" value="ECO:0000318"/>
    <property type="project" value="GO_Central"/>
</dbReference>
<dbReference type="GO" id="GO:0005739">
    <property type="term" value="C:mitochondrion"/>
    <property type="evidence" value="ECO:0000318"/>
    <property type="project" value="GO_Central"/>
</dbReference>
<dbReference type="GO" id="GO:0005634">
    <property type="term" value="C:nucleus"/>
    <property type="evidence" value="ECO:0007669"/>
    <property type="project" value="EnsemblFungi"/>
</dbReference>
<dbReference type="GO" id="GO:0005777">
    <property type="term" value="C:peroxisome"/>
    <property type="evidence" value="ECO:0007669"/>
    <property type="project" value="EnsemblFungi"/>
</dbReference>
<dbReference type="GO" id="GO:0050660">
    <property type="term" value="F:flavin adenine dinucleotide binding"/>
    <property type="evidence" value="ECO:0000318"/>
    <property type="project" value="GO_Central"/>
</dbReference>
<dbReference type="GO" id="GO:0004362">
    <property type="term" value="F:glutathione-disulfide reductase (NADPH) activity"/>
    <property type="evidence" value="ECO:0000318"/>
    <property type="project" value="GO_Central"/>
</dbReference>
<dbReference type="GO" id="GO:0050661">
    <property type="term" value="F:NADP binding"/>
    <property type="evidence" value="ECO:0007669"/>
    <property type="project" value="InterPro"/>
</dbReference>
<dbReference type="GO" id="GO:0045454">
    <property type="term" value="P:cell redox homeostasis"/>
    <property type="evidence" value="ECO:0000318"/>
    <property type="project" value="GO_Central"/>
</dbReference>
<dbReference type="GO" id="GO:0034599">
    <property type="term" value="P:cellular response to oxidative stress"/>
    <property type="evidence" value="ECO:0000318"/>
    <property type="project" value="GO_Central"/>
</dbReference>
<dbReference type="GO" id="GO:0006749">
    <property type="term" value="P:glutathione metabolic process"/>
    <property type="evidence" value="ECO:0000318"/>
    <property type="project" value="GO_Central"/>
</dbReference>
<dbReference type="FunFam" id="3.30.390.30:FF:000003">
    <property type="entry name" value="Glutathione reductase"/>
    <property type="match status" value="1"/>
</dbReference>
<dbReference type="FunFam" id="3.50.50.60:FF:000235">
    <property type="entry name" value="Glutathione reductase"/>
    <property type="match status" value="1"/>
</dbReference>
<dbReference type="Gene3D" id="3.30.390.30">
    <property type="match status" value="1"/>
</dbReference>
<dbReference type="Gene3D" id="3.50.50.60">
    <property type="entry name" value="FAD/NAD(P)-binding domain"/>
    <property type="match status" value="2"/>
</dbReference>
<dbReference type="InterPro" id="IPR036188">
    <property type="entry name" value="FAD/NAD-bd_sf"/>
</dbReference>
<dbReference type="InterPro" id="IPR023753">
    <property type="entry name" value="FAD/NAD-binding_dom"/>
</dbReference>
<dbReference type="InterPro" id="IPR016156">
    <property type="entry name" value="FAD/NAD-linked_Rdtase_dimer_sf"/>
</dbReference>
<dbReference type="InterPro" id="IPR006322">
    <property type="entry name" value="Glutathione_Rdtase_euk/bac"/>
</dbReference>
<dbReference type="InterPro" id="IPR046952">
    <property type="entry name" value="GSHR/TRXR-like"/>
</dbReference>
<dbReference type="InterPro" id="IPR001100">
    <property type="entry name" value="Pyr_nuc-diS_OxRdtase"/>
</dbReference>
<dbReference type="InterPro" id="IPR004099">
    <property type="entry name" value="Pyr_nucl-diS_OxRdtase_dimer"/>
</dbReference>
<dbReference type="InterPro" id="IPR012999">
    <property type="entry name" value="Pyr_OxRdtase_I_AS"/>
</dbReference>
<dbReference type="NCBIfam" id="TIGR01421">
    <property type="entry name" value="gluta_reduc_1"/>
    <property type="match status" value="1"/>
</dbReference>
<dbReference type="NCBIfam" id="NF004776">
    <property type="entry name" value="PRK06116.1"/>
    <property type="match status" value="1"/>
</dbReference>
<dbReference type="PANTHER" id="PTHR42737">
    <property type="entry name" value="GLUTATHIONE REDUCTASE"/>
    <property type="match status" value="1"/>
</dbReference>
<dbReference type="PANTHER" id="PTHR42737:SF2">
    <property type="entry name" value="GLUTATHIONE REDUCTASE"/>
    <property type="match status" value="1"/>
</dbReference>
<dbReference type="Pfam" id="PF07992">
    <property type="entry name" value="Pyr_redox_2"/>
    <property type="match status" value="1"/>
</dbReference>
<dbReference type="Pfam" id="PF02852">
    <property type="entry name" value="Pyr_redox_dim"/>
    <property type="match status" value="1"/>
</dbReference>
<dbReference type="PIRSF" id="PIRSF000350">
    <property type="entry name" value="Mercury_reductase_MerA"/>
    <property type="match status" value="1"/>
</dbReference>
<dbReference type="PRINTS" id="PR00368">
    <property type="entry name" value="FADPNR"/>
</dbReference>
<dbReference type="PRINTS" id="PR00411">
    <property type="entry name" value="PNDRDTASEI"/>
</dbReference>
<dbReference type="SUPFAM" id="SSF51905">
    <property type="entry name" value="FAD/NAD(P)-binding domain"/>
    <property type="match status" value="1"/>
</dbReference>
<dbReference type="SUPFAM" id="SSF55424">
    <property type="entry name" value="FAD/NAD-linked reductases, dimerisation (C-terminal) domain"/>
    <property type="match status" value="1"/>
</dbReference>
<dbReference type="PROSITE" id="PS00076">
    <property type="entry name" value="PYRIDINE_REDOX_1"/>
    <property type="match status" value="1"/>
</dbReference>
<accession>Q74ZK4</accession>
<keyword id="KW-0963">Cytoplasm</keyword>
<keyword id="KW-1015">Disulfide bond</keyword>
<keyword id="KW-0274">FAD</keyword>
<keyword id="KW-0285">Flavoprotein</keyword>
<keyword id="KW-0496">Mitochondrion</keyword>
<keyword id="KW-0521">NADP</keyword>
<keyword id="KW-0560">Oxidoreductase</keyword>
<keyword id="KW-0676">Redox-active center</keyword>
<keyword id="KW-1185">Reference proteome</keyword>
<gene>
    <name type="primary">GLR1</name>
    <name type="ordered locus">AGR196W</name>
</gene>
<organism>
    <name type="scientific">Eremothecium gossypii (strain ATCC 10895 / CBS 109.51 / FGSC 9923 / NRRL Y-1056)</name>
    <name type="common">Yeast</name>
    <name type="synonym">Ashbya gossypii</name>
    <dbReference type="NCBI Taxonomy" id="284811"/>
    <lineage>
        <taxon>Eukaryota</taxon>
        <taxon>Fungi</taxon>
        <taxon>Dikarya</taxon>
        <taxon>Ascomycota</taxon>
        <taxon>Saccharomycotina</taxon>
        <taxon>Saccharomycetes</taxon>
        <taxon>Saccharomycetales</taxon>
        <taxon>Saccharomycetaceae</taxon>
        <taxon>Eremothecium</taxon>
    </lineage>
</organism>